<proteinExistence type="evidence at protein level"/>
<comment type="function">
    <text evidence="1 3">ATP-dependent 5'-&gt;3' DNA/RNA helicase required for the expression and maturation of diverse classes of non-protein-coding RNAs like precursor tRNAs, rRNAs and small nuclear (snRNA) and nucleolar (snoRNA) RNAs. Directs RNA polymerase II transcription termination on snoRNAs as well as on several short protein-coding genes. May also play a role in transcription-coupled nucleotide excision repair (By similarity).</text>
</comment>
<comment type="subunit">
    <text evidence="3">Monomer.</text>
</comment>
<comment type="subcellular location">
    <subcellularLocation>
        <location evidence="4">Nucleus</location>
    </subcellularLocation>
</comment>
<comment type="similarity">
    <text evidence="5">Belongs to the DNA2/NAM7 helicase family.</text>
</comment>
<reference key="1">
    <citation type="journal article" date="2002" name="Nature">
        <title>The genome sequence of Schizosaccharomyces pombe.</title>
        <authorList>
            <person name="Wood V."/>
            <person name="Gwilliam R."/>
            <person name="Rajandream M.A."/>
            <person name="Lyne M.H."/>
            <person name="Lyne R."/>
            <person name="Stewart A."/>
            <person name="Sgouros J.G."/>
            <person name="Peat N."/>
            <person name="Hayles J."/>
            <person name="Baker S.G."/>
            <person name="Basham D."/>
            <person name="Bowman S."/>
            <person name="Brooks K."/>
            <person name="Brown D."/>
            <person name="Brown S."/>
            <person name="Chillingworth T."/>
            <person name="Churcher C.M."/>
            <person name="Collins M."/>
            <person name="Connor R."/>
            <person name="Cronin A."/>
            <person name="Davis P."/>
            <person name="Feltwell T."/>
            <person name="Fraser A."/>
            <person name="Gentles S."/>
            <person name="Goble A."/>
            <person name="Hamlin N."/>
            <person name="Harris D.E."/>
            <person name="Hidalgo J."/>
            <person name="Hodgson G."/>
            <person name="Holroyd S."/>
            <person name="Hornsby T."/>
            <person name="Howarth S."/>
            <person name="Huckle E.J."/>
            <person name="Hunt S."/>
            <person name="Jagels K."/>
            <person name="James K.D."/>
            <person name="Jones L."/>
            <person name="Jones M."/>
            <person name="Leather S."/>
            <person name="McDonald S."/>
            <person name="McLean J."/>
            <person name="Mooney P."/>
            <person name="Moule S."/>
            <person name="Mungall K.L."/>
            <person name="Murphy L.D."/>
            <person name="Niblett D."/>
            <person name="Odell C."/>
            <person name="Oliver K."/>
            <person name="O'Neil S."/>
            <person name="Pearson D."/>
            <person name="Quail M.A."/>
            <person name="Rabbinowitsch E."/>
            <person name="Rutherford K.M."/>
            <person name="Rutter S."/>
            <person name="Saunders D."/>
            <person name="Seeger K."/>
            <person name="Sharp S."/>
            <person name="Skelton J."/>
            <person name="Simmonds M.N."/>
            <person name="Squares R."/>
            <person name="Squares S."/>
            <person name="Stevens K."/>
            <person name="Taylor K."/>
            <person name="Taylor R.G."/>
            <person name="Tivey A."/>
            <person name="Walsh S.V."/>
            <person name="Warren T."/>
            <person name="Whitehead S."/>
            <person name="Woodward J.R."/>
            <person name="Volckaert G."/>
            <person name="Aert R."/>
            <person name="Robben J."/>
            <person name="Grymonprez B."/>
            <person name="Weltjens I."/>
            <person name="Vanstreels E."/>
            <person name="Rieger M."/>
            <person name="Schaefer M."/>
            <person name="Mueller-Auer S."/>
            <person name="Gabel C."/>
            <person name="Fuchs M."/>
            <person name="Duesterhoeft A."/>
            <person name="Fritzc C."/>
            <person name="Holzer E."/>
            <person name="Moestl D."/>
            <person name="Hilbert H."/>
            <person name="Borzym K."/>
            <person name="Langer I."/>
            <person name="Beck A."/>
            <person name="Lehrach H."/>
            <person name="Reinhardt R."/>
            <person name="Pohl T.M."/>
            <person name="Eger P."/>
            <person name="Zimmermann W."/>
            <person name="Wedler H."/>
            <person name="Wambutt R."/>
            <person name="Purnelle B."/>
            <person name="Goffeau A."/>
            <person name="Cadieu E."/>
            <person name="Dreano S."/>
            <person name="Gloux S."/>
            <person name="Lelaure V."/>
            <person name="Mottier S."/>
            <person name="Galibert F."/>
            <person name="Aves S.J."/>
            <person name="Xiang Z."/>
            <person name="Hunt C."/>
            <person name="Moore K."/>
            <person name="Hurst S.M."/>
            <person name="Lucas M."/>
            <person name="Rochet M."/>
            <person name="Gaillardin C."/>
            <person name="Tallada V.A."/>
            <person name="Garzon A."/>
            <person name="Thode G."/>
            <person name="Daga R.R."/>
            <person name="Cruzado L."/>
            <person name="Jimenez J."/>
            <person name="Sanchez M."/>
            <person name="del Rey F."/>
            <person name="Benito J."/>
            <person name="Dominguez A."/>
            <person name="Revuelta J.L."/>
            <person name="Moreno S."/>
            <person name="Armstrong J."/>
            <person name="Forsburg S.L."/>
            <person name="Cerutti L."/>
            <person name="Lowe T."/>
            <person name="McCombie W.R."/>
            <person name="Paulsen I."/>
            <person name="Potashkin J."/>
            <person name="Shpakovski G.V."/>
            <person name="Ussery D."/>
            <person name="Barrell B.G."/>
            <person name="Nurse P."/>
        </authorList>
    </citation>
    <scope>NUCLEOTIDE SEQUENCE [LARGE SCALE GENOMIC DNA]</scope>
    <source>
        <strain>972 / ATCC 24843</strain>
    </source>
</reference>
<reference key="2">
    <citation type="journal article" date="1999" name="Biochemistry">
        <title>The sen1(+) gene of Schizosaccharomyces pombe, a homologue of budding yeast SEN1, encodes an RNA and DNA helicase.</title>
        <authorList>
            <person name="Kim H.-D."/>
            <person name="Choe J."/>
            <person name="Seo Y.-S."/>
        </authorList>
    </citation>
    <scope>PROTEIN SEQUENCE OF 1230-1241 AND 1489-1493</scope>
    <scope>FUNCTION</scope>
    <scope>SUBUNIT</scope>
    <source>
        <strain>972 / ATCC 24843</strain>
    </source>
</reference>
<reference key="3">
    <citation type="journal article" date="2006" name="Nat. Biotechnol.">
        <title>ORFeome cloning and global analysis of protein localization in the fission yeast Schizosaccharomyces pombe.</title>
        <authorList>
            <person name="Matsuyama A."/>
            <person name="Arai R."/>
            <person name="Yashiroda Y."/>
            <person name="Shirai A."/>
            <person name="Kamata A."/>
            <person name="Sekido S."/>
            <person name="Kobayashi Y."/>
            <person name="Hashimoto A."/>
            <person name="Hamamoto M."/>
            <person name="Hiraoka Y."/>
            <person name="Horinouchi S."/>
            <person name="Yoshida M."/>
        </authorList>
    </citation>
    <scope>SUBCELLULAR LOCATION [LARGE SCALE ANALYSIS]</scope>
</reference>
<sequence length="1687" mass="192548">MAENLSDQDCFEKLSSSKEGQHWFCSGLLTQYIQPTFFWFAHDETPSFKWVLNAYHERLRSCTSCIQAYYELRNESLAKGSYSFTGFSITDLQEKWNKWDIIRVLEDFKALEDETIDFTSLPCLIFETLLNPKLFTCKNIYKNAIDAFNGLLSDWCSNIFLPGYLLFFYEASHPDVLEWVHSFFKENTEIRISSATVDAVFNTVVFESQNSSDSDCNFVSISSPEFWERTYMFLELLPLQSITAACESILKDYLLNLVKTSESLSSQQMSCLRICCNSSSFWSAADSFKEVSSFLKNLLKNVTATPFEVSDMNWAYIIASFFRTCLNDFVSVFPEWLKGFVEEKRTIGFIIYSVLDALFDLLSLDYSSPSFLNNTLSLMNANSITILQDYPEYMLKLRLHSLLYDIAFISWSHKAITKNPSFVFDPSYELSPFWKLDNLQEEKISDVLFSKISSCCFAHDIEISENSTPSGTMVQFAELWQVMSEYISGFLKGFSEKSSTEISNMLGDSSKFDTVVSFLLSPTQPLYVSAFHIVQIITNCTKNRNEALKKLVAMDFRGIVHGLADAVLNWQSILSFFPALRIMRFLSITNKSLSSDNSAFTENDIPTLGAYWQCIWNILDLVFSNVARWSLNNPADTVKALMKLTLKFVDDLFQNDGIFIKLLAKFDSLILLGETSESLFSFIMWLKINDLELRGIVINSLCKLFTKFSNFDYLFEDRTVTFLTDFIIRKQKAHLSADQCKQLANVLTQASPEAKTVLEQHRLSEMRKTKKQTELTNSAHVIKPSPTPQITVKQNTTKSSSAPRMGMLEQLKQEYLTKRNFESKLKSSAVSSRKPTFNEVKPANLLAEDLSDNEDDIDRKQGLFSLAKANKIPEIRQQERRQVQLLSNSTIKMHPSQIRMMTNRNVANVKARLFPSMTDFYKEILSWEPANQSPNPVLKFHKLDGKIIDSFKTVEHYMEVLQPMIFMECWSQIQSTKLDLKFSPVEGIMVERTAVNNFVDIGVSVAPKDLYGYPLYDTEVVSLAFNKEDASSMKGLCCFAKVERIVRQTNGVLVVLRTLPSMEILNKLQGNCALWFLKLTNLATFTRQYAGIRGLPYFHLADDIIRARPCSQPVKHSSSEIKAAMKRYQVNEPQAKAIMCALDNNGFTLIQGPPGTGKTKTIIGIISALLVDLSRYHITRPNQQSKSTESKQQILLCAPSNAAVDEVLLRLKRGFLLENGEKYIPRVVRIGNPETINVSVRDLSLEYQTEKQLLEVNQGAIDLGSLQELTRWRDTFYDCIQKIEELEKQIDVARDVAEDTKSLGKELQNKINEKNLAEQKVEELQSQSFTKNKEVDLLRKKAQKAILKQADVVCATLSGSGHDLVAHSSLNFSTVIIDEAAQAVELDTIIPLRYGAKKCILVGDPNQLPPTVLSKKAASLNYSQSLFVRIQKNFSNQMCLLSIQYRMHPDISHFPSKKFYDSRLEDGDNMAEKTQQVWHVNPKFTQYRLFDVRGKERTSNTMSTYNLEEVEYLVNMVDELLNKFPDVNFTGRIGVITPYRSQLHELRRAFKVKYGKSFMSTIDIQTVDGFQGQEKDIIFFSCVKSYSKHGIGFLRDFRRLNVALTRARSSLLIIGNMETLKTDDLWGSLVDDALSRKLVESPHIDSEGRLITISRTSEKRMKNEEFVEPPSKKLANSEPSKEIRQRS</sequence>
<dbReference type="EC" id="3.6.4.-"/>
<dbReference type="EMBL" id="CU329670">
    <property type="protein sequence ID" value="CAB03612.1"/>
    <property type="molecule type" value="Genomic_DNA"/>
</dbReference>
<dbReference type="PIR" id="T39072">
    <property type="entry name" value="T39072"/>
</dbReference>
<dbReference type="RefSeq" id="NP_594119.1">
    <property type="nucleotide sequence ID" value="NM_001019543.2"/>
</dbReference>
<dbReference type="SMR" id="Q92355"/>
<dbReference type="BioGRID" id="278055">
    <property type="interactions" value="36"/>
</dbReference>
<dbReference type="FunCoup" id="Q92355">
    <property type="interactions" value="11"/>
</dbReference>
<dbReference type="STRING" id="284812.Q92355"/>
<dbReference type="iPTMnet" id="Q92355"/>
<dbReference type="PaxDb" id="4896-SPAC6G9.10c.1"/>
<dbReference type="EnsemblFungi" id="SPAC6G9.10c.1">
    <property type="protein sequence ID" value="SPAC6G9.10c.1:pep"/>
    <property type="gene ID" value="SPAC6G9.10c"/>
</dbReference>
<dbReference type="GeneID" id="2541556"/>
<dbReference type="KEGG" id="spo:2541556"/>
<dbReference type="PomBase" id="SPAC6G9.10c">
    <property type="gene designation" value="sen1"/>
</dbReference>
<dbReference type="VEuPathDB" id="FungiDB:SPAC6G9.10c"/>
<dbReference type="eggNOG" id="KOG1801">
    <property type="taxonomic scope" value="Eukaryota"/>
</dbReference>
<dbReference type="HOGENOM" id="CLU_000459_2_0_1"/>
<dbReference type="InParanoid" id="Q92355"/>
<dbReference type="OMA" id="MIFMECW"/>
<dbReference type="PhylomeDB" id="Q92355"/>
<dbReference type="PRO" id="PR:Q92355"/>
<dbReference type="Proteomes" id="UP000002485">
    <property type="component" value="Chromosome I"/>
</dbReference>
<dbReference type="GO" id="GO:0000785">
    <property type="term" value="C:chromatin"/>
    <property type="evidence" value="ECO:0000314"/>
    <property type="project" value="PomBase"/>
</dbReference>
<dbReference type="GO" id="GO:0016604">
    <property type="term" value="C:nuclear body"/>
    <property type="evidence" value="ECO:0000318"/>
    <property type="project" value="GO_Central"/>
</dbReference>
<dbReference type="GO" id="GO:0005634">
    <property type="term" value="C:nucleus"/>
    <property type="evidence" value="ECO:0007005"/>
    <property type="project" value="PomBase"/>
</dbReference>
<dbReference type="GO" id="GO:0033678">
    <property type="term" value="F:5'-3' DNA/RNA helicase activity"/>
    <property type="evidence" value="ECO:0000314"/>
    <property type="project" value="PomBase"/>
</dbReference>
<dbReference type="GO" id="GO:0032574">
    <property type="term" value="F:5'-3' RNA helicase activity"/>
    <property type="evidence" value="ECO:0000314"/>
    <property type="project" value="PomBase"/>
</dbReference>
<dbReference type="GO" id="GO:0005524">
    <property type="term" value="F:ATP binding"/>
    <property type="evidence" value="ECO:0007669"/>
    <property type="project" value="UniProtKB-KW"/>
</dbReference>
<dbReference type="GO" id="GO:0016887">
    <property type="term" value="F:ATP hydrolysis activity"/>
    <property type="evidence" value="ECO:0000305"/>
    <property type="project" value="PomBase"/>
</dbReference>
<dbReference type="GO" id="GO:0003723">
    <property type="term" value="F:RNA binding"/>
    <property type="evidence" value="ECO:0000318"/>
    <property type="project" value="GO_Central"/>
</dbReference>
<dbReference type="GO" id="GO:0001147">
    <property type="term" value="F:transcription termination site sequence-specific DNA binding"/>
    <property type="evidence" value="ECO:0000318"/>
    <property type="project" value="GO_Central"/>
</dbReference>
<dbReference type="GO" id="GO:0006397">
    <property type="term" value="P:mRNA processing"/>
    <property type="evidence" value="ECO:0007669"/>
    <property type="project" value="UniProtKB-KW"/>
</dbReference>
<dbReference type="GO" id="GO:0006364">
    <property type="term" value="P:rRNA processing"/>
    <property type="evidence" value="ECO:0007669"/>
    <property type="project" value="UniProtKB-KW"/>
</dbReference>
<dbReference type="GO" id="GO:0006369">
    <property type="term" value="P:termination of RNA polymerase II transcription"/>
    <property type="evidence" value="ECO:0000318"/>
    <property type="project" value="GO_Central"/>
</dbReference>
<dbReference type="GO" id="GO:0006386">
    <property type="term" value="P:termination of RNA polymerase III transcription"/>
    <property type="evidence" value="ECO:0000315"/>
    <property type="project" value="PomBase"/>
</dbReference>
<dbReference type="GO" id="GO:0008033">
    <property type="term" value="P:tRNA processing"/>
    <property type="evidence" value="ECO:0007669"/>
    <property type="project" value="UniProtKB-KW"/>
</dbReference>
<dbReference type="CDD" id="cd18042">
    <property type="entry name" value="DEXXQc_SETX"/>
    <property type="match status" value="1"/>
</dbReference>
<dbReference type="CDD" id="cd18808">
    <property type="entry name" value="SF1_C_Upf1"/>
    <property type="match status" value="1"/>
</dbReference>
<dbReference type="FunFam" id="3.40.50.300:FF:000326">
    <property type="entry name" value="P-loop containing nucleoside triphosphate hydrolase"/>
    <property type="match status" value="1"/>
</dbReference>
<dbReference type="FunFam" id="3.40.50.300:FF:001152">
    <property type="entry name" value="tRNA-splicing endonuclease, putative"/>
    <property type="match status" value="1"/>
</dbReference>
<dbReference type="Gene3D" id="3.40.50.300">
    <property type="entry name" value="P-loop containing nucleotide triphosphate hydrolases"/>
    <property type="match status" value="2"/>
</dbReference>
<dbReference type="InterPro" id="IPR045055">
    <property type="entry name" value="DNA2/NAM7-like"/>
</dbReference>
<dbReference type="InterPro" id="IPR041679">
    <property type="entry name" value="DNA2/NAM7-like_C"/>
</dbReference>
<dbReference type="InterPro" id="IPR041677">
    <property type="entry name" value="DNA2/NAM7_AAA_11"/>
</dbReference>
<dbReference type="InterPro" id="IPR024481">
    <property type="entry name" value="Helicase_Sen1_N"/>
</dbReference>
<dbReference type="InterPro" id="IPR027417">
    <property type="entry name" value="P-loop_NTPase"/>
</dbReference>
<dbReference type="InterPro" id="IPR056474">
    <property type="entry name" value="SEN1_barrel"/>
</dbReference>
<dbReference type="InterPro" id="IPR047187">
    <property type="entry name" value="SF1_C_Upf1"/>
</dbReference>
<dbReference type="PANTHER" id="PTHR10887">
    <property type="entry name" value="DNA2/NAM7 HELICASE FAMILY"/>
    <property type="match status" value="1"/>
</dbReference>
<dbReference type="PANTHER" id="PTHR10887:SF526">
    <property type="entry name" value="HELICASE SEN1"/>
    <property type="match status" value="1"/>
</dbReference>
<dbReference type="Pfam" id="PF13086">
    <property type="entry name" value="AAA_11"/>
    <property type="match status" value="1"/>
</dbReference>
<dbReference type="Pfam" id="PF13087">
    <property type="entry name" value="AAA_12"/>
    <property type="match status" value="1"/>
</dbReference>
<dbReference type="Pfam" id="PF23576">
    <property type="entry name" value="SEN1_barrel"/>
    <property type="match status" value="1"/>
</dbReference>
<dbReference type="Pfam" id="PF12726">
    <property type="entry name" value="SEN1_N"/>
    <property type="match status" value="2"/>
</dbReference>
<dbReference type="SUPFAM" id="SSF52540">
    <property type="entry name" value="P-loop containing nucleoside triphosphate hydrolases"/>
    <property type="match status" value="1"/>
</dbReference>
<accession>Q92355</accession>
<keyword id="KW-0067">ATP-binding</keyword>
<keyword id="KW-0903">Direct protein sequencing</keyword>
<keyword id="KW-0347">Helicase</keyword>
<keyword id="KW-0378">Hydrolase</keyword>
<keyword id="KW-0507">mRNA processing</keyword>
<keyword id="KW-0547">Nucleotide-binding</keyword>
<keyword id="KW-0539">Nucleus</keyword>
<keyword id="KW-1185">Reference proteome</keyword>
<keyword id="KW-0698">rRNA processing</keyword>
<keyword id="KW-0819">tRNA processing</keyword>
<name>SEN1_SCHPO</name>
<evidence type="ECO:0000250" key="1"/>
<evidence type="ECO:0000256" key="2">
    <source>
        <dbReference type="SAM" id="MobiDB-lite"/>
    </source>
</evidence>
<evidence type="ECO:0000269" key="3">
    <source>
    </source>
</evidence>
<evidence type="ECO:0000269" key="4">
    <source>
    </source>
</evidence>
<evidence type="ECO:0000305" key="5"/>
<feature type="chain" id="PRO_0000080723" description="Helicase sen1">
    <location>
        <begin position="1"/>
        <end position="1687"/>
    </location>
</feature>
<feature type="region of interest" description="Disordered" evidence="2">
    <location>
        <begin position="781"/>
        <end position="801"/>
    </location>
</feature>
<feature type="region of interest" description="Disordered" evidence="2">
    <location>
        <begin position="1661"/>
        <end position="1687"/>
    </location>
</feature>
<feature type="compositionally biased region" description="Polar residues" evidence="2">
    <location>
        <begin position="788"/>
        <end position="801"/>
    </location>
</feature>
<feature type="binding site" evidence="1">
    <location>
        <position position="1134"/>
    </location>
    <ligand>
        <name>ATP</name>
        <dbReference type="ChEBI" id="CHEBI:30616"/>
    </ligand>
</feature>
<feature type="binding site" evidence="1">
    <location>
        <begin position="1155"/>
        <end position="1159"/>
    </location>
    <ligand>
        <name>ATP</name>
        <dbReference type="ChEBI" id="CHEBI:30616"/>
    </ligand>
</feature>
<feature type="binding site" evidence="1">
    <location>
        <position position="1407"/>
    </location>
    <ligand>
        <name>ATP</name>
        <dbReference type="ChEBI" id="CHEBI:30616"/>
    </ligand>
</feature>
<feature type="binding site" evidence="1">
    <location>
        <position position="1445"/>
    </location>
    <ligand>
        <name>ATP</name>
        <dbReference type="ChEBI" id="CHEBI:30616"/>
    </ligand>
</feature>
<feature type="binding site" evidence="1">
    <location>
        <position position="1574"/>
    </location>
    <ligand>
        <name>ATP</name>
        <dbReference type="ChEBI" id="CHEBI:30616"/>
    </ligand>
</feature>
<gene>
    <name type="primary">sen1</name>
    <name type="ORF">SPAC6G9.10c</name>
</gene>
<organism>
    <name type="scientific">Schizosaccharomyces pombe (strain 972 / ATCC 24843)</name>
    <name type="common">Fission yeast</name>
    <dbReference type="NCBI Taxonomy" id="284812"/>
    <lineage>
        <taxon>Eukaryota</taxon>
        <taxon>Fungi</taxon>
        <taxon>Dikarya</taxon>
        <taxon>Ascomycota</taxon>
        <taxon>Taphrinomycotina</taxon>
        <taxon>Schizosaccharomycetes</taxon>
        <taxon>Schizosaccharomycetales</taxon>
        <taxon>Schizosaccharomycetaceae</taxon>
        <taxon>Schizosaccharomyces</taxon>
    </lineage>
</organism>
<protein>
    <recommendedName>
        <fullName>Helicase sen1</fullName>
        <ecNumber>3.6.4.-</ecNumber>
    </recommendedName>
</protein>